<reference key="1">
    <citation type="journal article" date="1999" name="J. Virol.">
        <title>Identification of a spliced gene from Kaposi's sarcoma-associated herpesvirus encoding a protein with similarities to latent membrane proteins 1 and 2A of Epstein-Barr virus.</title>
        <authorList>
            <person name="Glenn M."/>
            <person name="Rainbow L."/>
            <person name="Aurade F."/>
            <person name="Davison A."/>
            <person name="Schulz T.F."/>
        </authorList>
    </citation>
    <scope>NUCLEOTIDE SEQUENCE [LARGE SCALE GENOMIC DNA]</scope>
</reference>
<reference key="2">
    <citation type="journal article" date="2006" name="J. Gen. Virol.">
        <title>Kaposi's sarcoma-associated herpesvirus immune modulation: an overview.</title>
        <authorList>
            <person name="Rezaee S.A.R."/>
            <person name="Cunningham C."/>
            <person name="Davison A.J."/>
            <person name="Blackbourn D.J."/>
        </authorList>
    </citation>
    <scope>NUCLEOTIDE SEQUENCE [LARGE SCALE GENOMIC DNA]</scope>
</reference>
<reference key="3">
    <citation type="journal article" date="1999" name="Science">
        <title>Efficient persistence of extrachromosomal KSHV DNA mediated by latency-associated nuclear antigen.</title>
        <authorList>
            <person name="Ballestas M.E."/>
            <person name="Chatis P.A."/>
            <person name="Kaye K.M."/>
        </authorList>
    </citation>
    <scope>FUNCTION</scope>
    <scope>SUBCELLULAR LOCATION</scope>
</reference>
<reference key="4">
    <citation type="journal article" date="1999" name="J. Gen. Virol.">
        <title>Human herpesvirus-8-encoded LNA-1 accumulates in heterochromatin- associated nuclear bodies.</title>
        <authorList>
            <person name="Szekely L."/>
            <person name="Kiss C."/>
            <person name="Mattsson K."/>
            <person name="Kashuba E."/>
            <person name="Pokrovskaja K."/>
            <person name="Juhasz A."/>
            <person name="Holmvall P."/>
            <person name="Klein G."/>
        </authorList>
    </citation>
    <scope>SUBCELLULAR LOCATION</scope>
</reference>
<reference key="5">
    <citation type="journal article" date="2005" name="J. Virol.">
        <title>Brd2/RING3 interacts with a chromatin-binding domain in the Kaposi's Sarcoma-associated herpesvirus latency-associated nuclear antigen 1 (LANA-1) that is required for multiple functions of LANA-1.</title>
        <authorList>
            <person name="Viejo-Borbolla A."/>
            <person name="Ottinger M."/>
            <person name="Bruening E."/>
            <person name="Buerger A."/>
            <person name="Koenig R."/>
            <person name="Kati E."/>
            <person name="Sheldon J.A."/>
            <person name="Schulz T.F."/>
        </authorList>
    </citation>
    <scope>INTERACTION WITH HOST BRD2</scope>
    <scope>FUNCTION</scope>
</reference>
<reference key="6">
    <citation type="journal article" date="2006" name="Science">
        <title>The nucleosomal surface as a docking station for Kaposi's sarcoma herpesvirus LANA.</title>
        <authorList>
            <person name="Barbera A.J."/>
            <person name="Chodaparambil J.V."/>
            <person name="Kelley-Clarke B."/>
            <person name="Joukov V."/>
            <person name="Walter J.C."/>
            <person name="Luger K."/>
            <person name="Kaye K.M."/>
        </authorList>
    </citation>
    <scope>FUNCTION</scope>
    <scope>INTERACTION WITH HOST HISTONES H2A AND H2B</scope>
</reference>
<reference key="7">
    <citation type="journal article" date="2011" name="J. Virol.">
        <title>Kaposi's sarcoma-associated herpesvirus-encoded latency-associated nuclear antigen reduces interleukin-8 expression in endothelial cells and impairs neutrophil chemotaxis by degrading nuclear p65.</title>
        <authorList>
            <person name="Li X."/>
            <person name="Liang D."/>
            <person name="Lin X."/>
            <person name="Robertson E.S."/>
            <person name="Lan K."/>
        </authorList>
    </citation>
    <scope>FUNCTION</scope>
    <scope>SUBCELLULAR LOCATION</scope>
    <scope>INTERACTION WITH HOST RELA; CUL5; ELOB AND ELOC</scope>
</reference>
<reference key="8">
    <citation type="journal article" date="2014" name="J. Virol.">
        <title>Kaposi's sarcoma-associated herpesvirus-encoded LANA interacts with host KAP1 to facilitate establishment of viral latency.</title>
        <authorList>
            <person name="Sun R."/>
            <person name="Liang D."/>
            <person name="Gao Y."/>
            <person name="Lan K."/>
        </authorList>
    </citation>
    <scope>FUNCTION</scope>
    <scope>INTERACTION WITH HOST TRIM28</scope>
    <scope>SUBCELLULAR LOCATION</scope>
</reference>
<reference key="9">
    <citation type="journal article" date="2015" name="J. Virol.">
        <title>Activated Nrf2 Interacts with Kaposi's Sarcoma-Associated Herpesvirus Latency Protein LANA-1 and Host Protein KAP1 To Mediate Global Lytic Gene Repression.</title>
        <authorList>
            <person name="Gjyshi O."/>
            <person name="Roy A."/>
            <person name="Dutta S."/>
            <person name="Veettil M.V."/>
            <person name="Dutta D."/>
            <person name="Chandran B."/>
        </authorList>
    </citation>
    <scope>FUNCTION</scope>
    <scope>SUBCELLULAR LOCATION</scope>
    <scope>INTERACTION WITH HOST NFE2L2/NRF2</scope>
</reference>
<reference key="10">
    <citation type="journal article" date="2015" name="J. Virol.">
        <title>Bub1 in Complex with LANA Recruits PCNA To Regulate Kaposi's Sarcoma-Associated Herpesvirus Latent Replication and DNA Translesion Synthesis.</title>
        <authorList>
            <person name="Sun Z."/>
            <person name="Jha H.C."/>
            <person name="Robertson E.S."/>
        </authorList>
    </citation>
    <scope>FUNCTION</scope>
    <scope>INTERACTION WITH HOST BUB1 AND PCNA</scope>
</reference>
<reference key="11">
    <citation type="journal article" date="2016" name="Sci. Rep.">
        <title>KSHV encoded LANA recruits Nucleosome Assembly Protein NAP1L1 for regulating viral DNA replication and transcription.</title>
        <authorList>
            <person name="Gupta N."/>
            <person name="Thakker S."/>
            <person name="Verma S.C."/>
        </authorList>
    </citation>
    <scope>FUNCTION</scope>
    <scope>INTERACTION WITH HOST NAP1L1</scope>
    <scope>SUBCELLULAR LOCATION</scope>
</reference>
<reference key="12">
    <citation type="journal article" date="2017" name="J. Cell Biol.">
        <title>Kaposi's sarcoma-associated herpesvirus stably clusters its genomes across generations to maintain itself extrachromosomally.</title>
        <authorList>
            <person name="Chiu Y.F."/>
            <person name="Sugden A.U."/>
            <person name="Fox K."/>
            <person name="Hayes M."/>
            <person name="Sugden B."/>
        </authorList>
    </citation>
    <scope>FUNCTION</scope>
</reference>
<reference key="13">
    <citation type="journal article" date="2017" name="PLoS Pathog.">
        <title>Nuclear Localization and Cleavage of STAT6 Is Induced by Kaposi's Sarcoma-Associated Herpesvirus for Viral Latency.</title>
        <authorList>
            <person name="Wang C."/>
            <person name="Zhu C."/>
            <person name="Wei F."/>
            <person name="Gao S."/>
            <person name="Zhang L."/>
            <person name="Li Y."/>
            <person name="Feng Y."/>
            <person name="Tong Y."/>
            <person name="Xu J."/>
            <person name="Wang B."/>
            <person name="Yuan Z."/>
            <person name="Robertson E.S."/>
            <person name="Cai Q."/>
        </authorList>
    </citation>
    <scope>FUNCTION</scope>
</reference>
<reference key="14">
    <citation type="journal article" date="2021" name="Nucleic Acids Res.">
        <title>MLL1 is regulated by KSHV LANA and is important for virus latency.</title>
        <authorList>
            <person name="Tan M."/>
            <person name="Li S."/>
            <person name="Juillard F."/>
            <person name="Chitas R."/>
            <person name="Custodio T.F."/>
            <person name="Xue H."/>
            <person name="Szymula A."/>
            <person name="Sun Q."/>
            <person name="Liu B."/>
            <person name="Alvarez A.L."/>
            <person name="Chen S."/>
            <person name="Huang J."/>
            <person name="Simas J.P."/>
            <person name="McVey C.E."/>
            <person name="Kaye K.M."/>
        </authorList>
    </citation>
    <scope>FUNCTION</scope>
    <scope>INTERACTION WITH HOST KMT2A AND WRD5</scope>
    <scope>SUBCELLULAR LOCATION</scope>
</reference>
<reference key="15">
    <citation type="journal article" date="2015" name="Proc. Natl. Acad. Sci. U.S.A.">
        <title>The 3D structure of Kaposi sarcoma herpesvirus LANA C-terminal domain bound to DNA.</title>
        <authorList>
            <person name="Hellert J."/>
            <person name="Weidner-Glunde M."/>
            <person name="Krausze J."/>
            <person name="Lunsdorf H."/>
            <person name="Ritter C."/>
            <person name="Schulz T.F."/>
            <person name="Luhrs T."/>
        </authorList>
    </citation>
    <scope>X-RAY CRYSTALLOGRAPHY (2.87 ANGSTROMS) OF 975-1113</scope>
    <scope>REGION</scope>
    <scope>SUBUNIT</scope>
</reference>
<reference key="16">
    <citation type="journal article" date="2017" name="J. Am. Chem. Soc.">
        <title>Synthetic Posttranslational Modifications: Chemical Catalyst-Driven Regioselective Histone Acylation of Native Chromatin.</title>
        <authorList>
            <person name="Amamoto Y."/>
            <person name="Aoi Y."/>
            <person name="Nagashima N."/>
            <person name="Suto H."/>
            <person name="Yoshidome D."/>
            <person name="Arimura Y."/>
            <person name="Osakabe A."/>
            <person name="Kato D."/>
            <person name="Kurumizaka H."/>
            <person name="Kawashima S.A."/>
            <person name="Yamatsugu K."/>
            <person name="Kanai M."/>
        </authorList>
    </citation>
    <scope>X-RAY CRYSTALLOGRAPHY (2.70 ANGSTROMS) OF 5-15</scope>
</reference>
<accession>Q9QR71</accession>
<comment type="function">
    <text evidence="2 4 5 6 7 9 10 11 12 13 14">Multifunctional protein that plays a role in the replication and long-term persistence of the viral episomal genome in dividing cells. Binds to mitotic chromosomes via its N-terminal region and to a 16-bp imperfect palindrome within the origin of replication (oriP) located in the viral terminal repeat (TR) through its C-terminal. Tethers viral episomes to chromosomes during mitosis. Plays a critical role in the shutdown of lytic gene expression during the early stage of infection by interacting with host TRIM28. Also plays a role in the repression of host NF-kappa-B activity upon TNF-alpha stimulation by promoting the proteasomal degradation of host RELA (PubMed:21697472). Promotes nuclear localization and cleavage of host STAT6 leading to constitutive activation of the IL13/STAT6 signaling pathway to promote viral latency (PubMed:28099521). Interacts with and modulates the histone methyltransferase MLL1 complex activity, leading to its recruitment on viral DNA terminal repeats changing the dynamic of histone H3 methylated 'Lys-4'(H3K4me) profile during the initial hours following infection (PubMed:34850113).</text>
</comment>
<comment type="subunit">
    <text evidence="4 5 6 7 8 9 10 11 14">Homooligomer (PubMed:25947153). Interacts with host BRD2 (PubMed:16227282). Interacts with host RELA, ELOB, ELOC and CUL5; these interactions induce the proteasomal degradation of host RELA (PubMed:21697472). Interacts with host TRIM28 and NFE2L2/NRF2; these interactions are essential for the shutdown of lytic gene expression during the early stage of infection (PubMed:24741090, PubMed:25995248). Interacts (via N-terminus) with host histones H2A and H2B; these interactions are essential to dock LANA1 onto chromosomes (PubMed:16469929). Interacts with host BUB1 and PCNA (PubMed:26223641). Interacts with host NAP1L1; this interaction is required for LANA1-dependent DNA replication (PubMed:27599637). Interacts with components of the host MLL1 complex KMT2A and WDR5 (PubMed:34850113).</text>
</comment>
<comment type="interaction">
    <interactant intactId="EBI-15602554">
        <id>Q9QR71</id>
    </interactant>
    <interactant intactId="EBI-719459">
        <id>P26358</id>
        <label>DNMT1</label>
    </interactant>
    <organismsDiffer>true</organismsDiffer>
    <experiments>2</experiments>
</comment>
<comment type="interaction">
    <interactant intactId="EBI-15602554">
        <id>Q9QR71</id>
    </interactant>
    <interactant intactId="EBI-923653">
        <id>Q9Y6K1</id>
        <label>DNMT3A</label>
    </interactant>
    <organismsDiffer>true</organismsDiffer>
    <experiments>3</experiments>
</comment>
<comment type="interaction">
    <interactant intactId="EBI-15602554">
        <id>Q9QR71</id>
    </interactant>
    <interactant intactId="EBI-80125">
        <id>Q9UBC3</id>
        <label>DNMT3B</label>
    </interactant>
    <organismsDiffer>true</organismsDiffer>
    <experiments>2</experiments>
</comment>
<comment type="interaction">
    <interactant intactId="EBI-15602554">
        <id>Q9QR71</id>
    </interactant>
    <interactant intactId="EBI-353620">
        <id>Q6FI13</id>
        <label>H2AC19</label>
    </interactant>
    <organismsDiffer>true</organismsDiffer>
    <experiments>3</experiments>
</comment>
<comment type="interaction">
    <interactant intactId="EBI-15602554">
        <id>Q9QR71</id>
    </interactant>
    <interactant intactId="EBI-4409738">
        <id>O60814</id>
        <label>H2BC12</label>
    </interactant>
    <organismsDiffer>true</organismsDiffer>
    <experiments>3</experiments>
</comment>
<comment type="interaction">
    <interactant intactId="EBI-15602554">
        <id>Q9QR71</id>
    </interactant>
    <interactant intactId="EBI-302023">
        <id>P62805</id>
        <label>H4C9</label>
    </interactant>
    <organismsDiffer>true</organismsDiffer>
    <experiments>2</experiments>
</comment>
<comment type="subcellular location">
    <subcellularLocation>
        <location evidence="2 3 6 9 11 14">Host nucleus</location>
    </subcellularLocation>
    <text evidence="2 3">Colocalizes with viral episomes on host chromosomes.</text>
</comment>
<gene>
    <name type="primary">LANA1</name>
    <name type="ORF">ORF73</name>
</gene>
<sequence>MAPPGMRLRSGRSTGAPLTRGSCRKRNRSPERCDLGDDLHLQPRRKHVADSVDGRECGPHTLPIPGSPTVFTSGLPAFVSSPTLPVAPIPSPAPATPLPPPALLPPVTTSSSPIPPSHPVSPGTTDTHSPSPALPPTQSPESSQRPPLSSPTGRPDSSTPMRPPPSQQTTPPHSPTTPPPEPPSKSSPDSLAPSTLRSLRKRRLSSPQGPSTLNPICQSPPVSPPRCDFANRSVYPPWATESPIYVGSSSDGDTPPRQPPTSPISIGSSSPSEGSWGDDTAMLVLLAEIAEEASKNEKECSENNQAGEDNGDNEISKESQVDKDDNDNKDDEEEQETDEEDEEDDEEDDEEDDEEDDEEDDEEDDEEDDEEEDEEEDEEEDEEEDEEEEEDEEDDDDEDNEDEEDDEEEDKKEDEEDGGDGNKTLSIQSSQQQQEPQQQEPQQQEPQQQEPQQQEPQQQEPQQQEPQQQEPQQREPQQREPQQREPQQREPQQREPQQREPQQREPQQREPQQREPQQREPQQREPQQREPQQQEPQQQEPQQQEPQQQEPQQQEPQQQEPQQQEPQQQEPQQQEPQQQEPQQQEPQQQEPQQQDEQQQDEQQQDEQQQDEQQQDEQQQDEQQQDEQQQDEQEQQDEQQQDEQQQQDEQEQQEEQEQQEEQQQDEQQQDEQQQDEQQQDEQEQQDEQQQDEQQQQDEQEQQEEQEQQEEQEQQEEQEQQEEQEQELEEQEQELEEQEQELEEQEQELEEQEQELEEQEQELEEQEQELEEQEQELEEQEQELEEQEQELEEQEQELEEQEQELEEQEQELEEQEQELEEQEQEQELEEVEEQEQEQEEQELEEVEEQEQEQEEQEEQELEEVEEQEEQELEEVEEQEEQELEEVEEQEQQGVEQQEQETVEEPIILHGSSSEDEMEVDYPVVSTHEQIASSPPGDNTPDDDPQPGPSREYRYVLRTSPPHRPGVRMRRVPVTHPKKPHPRYQQPPVPYRQIDDCPAKARPQHIFYRRFLGKDGRRDPKCQWKFAVIFWGNDPYGLKKLSQAFQFGGVKAGPVSCLPHPGPDQSPITYCVYVYCQNKDTSKKVQMARLAWEASHPLAGNLQSSIVKFKKPLPLTQPGENQGPGDSPQEMT</sequence>
<proteinExistence type="evidence at protein level"/>
<name>LANA1_HHV8P</name>
<feature type="chain" id="PRO_0000423799" description="Protein LANA1">
    <location>
        <begin position="1"/>
        <end position="1129"/>
    </location>
</feature>
<feature type="region of interest" description="Disordered" evidence="1">
    <location>
        <begin position="1"/>
        <end position="988"/>
    </location>
</feature>
<feature type="region of interest" description="DNA-binding domain" evidence="8">
    <location>
        <begin position="1008"/>
        <end position="1129"/>
    </location>
</feature>
<feature type="region of interest" description="Disordered" evidence="1">
    <location>
        <begin position="1110"/>
        <end position="1129"/>
    </location>
</feature>
<feature type="compositionally biased region" description="Basic and acidic residues" evidence="1">
    <location>
        <begin position="28"/>
        <end position="41"/>
    </location>
</feature>
<feature type="compositionally biased region" description="Basic and acidic residues" evidence="1">
    <location>
        <begin position="48"/>
        <end position="58"/>
    </location>
</feature>
<feature type="compositionally biased region" description="Pro residues" evidence="1">
    <location>
        <begin position="85"/>
        <end position="104"/>
    </location>
</feature>
<feature type="compositionally biased region" description="Polar residues" evidence="1">
    <location>
        <begin position="139"/>
        <end position="156"/>
    </location>
</feature>
<feature type="compositionally biased region" description="Pro residues" evidence="1">
    <location>
        <begin position="161"/>
        <end position="185"/>
    </location>
</feature>
<feature type="compositionally biased region" description="Low complexity" evidence="1">
    <location>
        <begin position="186"/>
        <end position="197"/>
    </location>
</feature>
<feature type="compositionally biased region" description="Polar residues" evidence="1">
    <location>
        <begin position="207"/>
        <end position="217"/>
    </location>
</feature>
<feature type="compositionally biased region" description="Low complexity" evidence="1">
    <location>
        <begin position="263"/>
        <end position="275"/>
    </location>
</feature>
<feature type="compositionally biased region" description="Basic and acidic residues" evidence="1">
    <location>
        <begin position="292"/>
        <end position="301"/>
    </location>
</feature>
<feature type="compositionally biased region" description="Basic and acidic residues" evidence="1">
    <location>
        <begin position="314"/>
        <end position="323"/>
    </location>
</feature>
<feature type="compositionally biased region" description="Acidic residues" evidence="1">
    <location>
        <begin position="324"/>
        <end position="419"/>
    </location>
</feature>
<feature type="compositionally biased region" description="Low complexity" evidence="1">
    <location>
        <begin position="431"/>
        <end position="471"/>
    </location>
</feature>
<feature type="compositionally biased region" description="Basic and acidic residues" evidence="1">
    <location>
        <begin position="472"/>
        <end position="528"/>
    </location>
</feature>
<feature type="compositionally biased region" description="Low complexity" evidence="1">
    <location>
        <begin position="529"/>
        <end position="596"/>
    </location>
</feature>
<feature type="compositionally biased region" description="Acidic residues" evidence="1">
    <location>
        <begin position="597"/>
        <end position="888"/>
    </location>
</feature>
<feature type="compositionally biased region" description="Polar residues" evidence="1">
    <location>
        <begin position="924"/>
        <end position="934"/>
    </location>
</feature>
<feature type="compositionally biased region" description="Basic residues" evidence="1">
    <location>
        <begin position="962"/>
        <end position="979"/>
    </location>
</feature>
<feature type="helix" evidence="15">
    <location>
        <begin position="991"/>
        <end position="993"/>
    </location>
</feature>
<feature type="helix" evidence="15">
    <location>
        <begin position="996"/>
        <end position="998"/>
    </location>
</feature>
<feature type="helix" evidence="15">
    <location>
        <begin position="999"/>
        <end position="1009"/>
    </location>
</feature>
<feature type="helix" evidence="15">
    <location>
        <begin position="1010"/>
        <end position="1013"/>
    </location>
</feature>
<feature type="strand" evidence="15">
    <location>
        <begin position="1023"/>
        <end position="1030"/>
    </location>
</feature>
<feature type="helix" evidence="15">
    <location>
        <begin position="1032"/>
        <end position="1041"/>
    </location>
</feature>
<feature type="strand" evidence="15">
    <location>
        <begin position="1043"/>
        <end position="1049"/>
    </location>
</feature>
<feature type="strand" evidence="15">
    <location>
        <begin position="1058"/>
        <end position="1061"/>
    </location>
</feature>
<feature type="strand" evidence="15">
    <location>
        <begin position="1067"/>
        <end position="1075"/>
    </location>
</feature>
<feature type="helix" evidence="15">
    <location>
        <begin position="1076"/>
        <end position="1092"/>
    </location>
</feature>
<feature type="strand" evidence="15">
    <location>
        <begin position="1100"/>
        <end position="1108"/>
    </location>
</feature>
<keyword id="KW-0002">3D-structure</keyword>
<keyword id="KW-0238">DNA-binding</keyword>
<keyword id="KW-1048">Host nucleus</keyword>
<keyword id="KW-0945">Host-virus interaction</keyword>
<keyword id="KW-1100">Inhibition of host NF-kappa-B by virus</keyword>
<keyword id="KW-1185">Reference proteome</keyword>
<organismHost>
    <name type="scientific">Homo sapiens</name>
    <name type="common">Human</name>
    <dbReference type="NCBI Taxonomy" id="9606"/>
</organismHost>
<organism>
    <name type="scientific">Human herpesvirus 8 type P (isolate GK18)</name>
    <name type="common">HHV-8</name>
    <name type="synonym">Kaposi's sarcoma-associated herpesvirus</name>
    <dbReference type="NCBI Taxonomy" id="868565"/>
    <lineage>
        <taxon>Viruses</taxon>
        <taxon>Duplodnaviria</taxon>
        <taxon>Heunggongvirae</taxon>
        <taxon>Peploviricota</taxon>
        <taxon>Herviviricetes</taxon>
        <taxon>Herpesvirales</taxon>
        <taxon>Orthoherpesviridae</taxon>
        <taxon>Gammaherpesvirinae</taxon>
        <taxon>Rhadinovirus</taxon>
        <taxon>Rhadinovirus humangamma8</taxon>
        <taxon>Human herpesvirus 8</taxon>
    </lineage>
</organism>
<dbReference type="EMBL" id="AF148805">
    <property type="protein sequence ID" value="AAD46501.1"/>
    <property type="molecule type" value="Genomic_DNA"/>
</dbReference>
<dbReference type="RefSeq" id="YP_001129431.1">
    <property type="nucleotide sequence ID" value="NC_009333.1"/>
</dbReference>
<dbReference type="PDB" id="2ND0">
    <property type="method" value="NMR"/>
    <property type="chains" value="B=1098-1116"/>
</dbReference>
<dbReference type="PDB" id="4UZB">
    <property type="method" value="X-ray"/>
    <property type="resolution" value="2.87 A"/>
    <property type="chains" value="A/B=975-1113"/>
</dbReference>
<dbReference type="PDB" id="4UZC">
    <property type="method" value="X-ray"/>
    <property type="resolution" value="3.70 A"/>
    <property type="chains" value="A/B/C/D=980-1116"/>
</dbReference>
<dbReference type="PDB" id="5GTC">
    <property type="method" value="X-ray"/>
    <property type="resolution" value="2.70 A"/>
    <property type="chains" value="K=5-15"/>
</dbReference>
<dbReference type="PDB" id="7BCY">
    <property type="method" value="X-ray"/>
    <property type="resolution" value="1.50 A"/>
    <property type="chains" value="P/Q=23-32"/>
</dbReference>
<dbReference type="PDB" id="8Q3M">
    <property type="method" value="X-ray"/>
    <property type="resolution" value="2.50 A"/>
    <property type="chains" value="MMM=4-17"/>
</dbReference>
<dbReference type="PDB" id="8Q3X">
    <property type="method" value="X-ray"/>
    <property type="resolution" value="2.30 A"/>
    <property type="chains" value="MMM=4-17"/>
</dbReference>
<dbReference type="PDBsum" id="2ND0"/>
<dbReference type="PDBsum" id="4UZB"/>
<dbReference type="PDBsum" id="4UZC"/>
<dbReference type="PDBsum" id="5GTC"/>
<dbReference type="PDBsum" id="7BCY"/>
<dbReference type="PDBsum" id="8Q3M"/>
<dbReference type="PDBsum" id="8Q3X"/>
<dbReference type="BMRB" id="Q9QR71"/>
<dbReference type="SASBDB" id="Q9QR71"/>
<dbReference type="SMR" id="Q9QR71"/>
<dbReference type="BioGRID" id="1777030">
    <property type="interactions" value="124"/>
</dbReference>
<dbReference type="DIP" id="DIP-61278N"/>
<dbReference type="IntAct" id="Q9QR71">
    <property type="interactions" value="8"/>
</dbReference>
<dbReference type="BindingDB" id="Q9QR71"/>
<dbReference type="iPTMnet" id="Q9QR71"/>
<dbReference type="KEGG" id="vg:4961527"/>
<dbReference type="EvolutionaryTrace" id="Q9QR71"/>
<dbReference type="PRO" id="PR:Q9QR71"/>
<dbReference type="Proteomes" id="UP000000942">
    <property type="component" value="Segment"/>
</dbReference>
<dbReference type="GO" id="GO:0042025">
    <property type="term" value="C:host cell nucleus"/>
    <property type="evidence" value="ECO:0000314"/>
    <property type="project" value="UniProtKB"/>
</dbReference>
<dbReference type="GO" id="GO:0003677">
    <property type="term" value="F:DNA binding"/>
    <property type="evidence" value="ECO:0007669"/>
    <property type="project" value="UniProtKB-KW"/>
</dbReference>
<dbReference type="GO" id="GO:0003713">
    <property type="term" value="F:transcription coactivator activity"/>
    <property type="evidence" value="ECO:0007669"/>
    <property type="project" value="TreeGrafter"/>
</dbReference>
<dbReference type="GO" id="GO:0045944">
    <property type="term" value="P:positive regulation of transcription by RNA polymerase II"/>
    <property type="evidence" value="ECO:0007669"/>
    <property type="project" value="TreeGrafter"/>
</dbReference>
<dbReference type="GO" id="GO:0085034">
    <property type="term" value="P:symbiont-mediated suppression of host NF-kappaB cascade"/>
    <property type="evidence" value="ECO:0000314"/>
    <property type="project" value="UniProtKB"/>
</dbReference>
<dbReference type="GO" id="GO:0019058">
    <property type="term" value="P:viral life cycle"/>
    <property type="evidence" value="ECO:0000269"/>
    <property type="project" value="DisProt"/>
</dbReference>
<dbReference type="Gene3D" id="3.30.70.390">
    <property type="entry name" value="Epstein Barr virus nuclear antigen-1, DNA-binding domain"/>
    <property type="match status" value="1"/>
</dbReference>
<dbReference type="InterPro" id="IPR037007">
    <property type="entry name" value="EBNA1_DNA-bd_sf"/>
</dbReference>
<dbReference type="InterPro" id="IPR048523">
    <property type="entry name" value="LANA1_DNA-bd"/>
</dbReference>
<dbReference type="PANTHER" id="PTHR23107:SF0">
    <property type="entry name" value="IP09280P"/>
    <property type="match status" value="1"/>
</dbReference>
<dbReference type="PANTHER" id="PTHR23107">
    <property type="entry name" value="SYNOVIAL SARCOMA ASSOCIATED SS18 PROTEIN"/>
    <property type="match status" value="1"/>
</dbReference>
<dbReference type="Pfam" id="PF21501">
    <property type="entry name" value="LANA1_DNA-bd"/>
    <property type="match status" value="1"/>
</dbReference>
<dbReference type="PRINTS" id="PR01217">
    <property type="entry name" value="PRICHEXTENSN"/>
</dbReference>
<evidence type="ECO:0000256" key="1">
    <source>
        <dbReference type="SAM" id="MobiDB-lite"/>
    </source>
</evidence>
<evidence type="ECO:0000269" key="2">
    <source>
    </source>
</evidence>
<evidence type="ECO:0000269" key="3">
    <source>
    </source>
</evidence>
<evidence type="ECO:0000269" key="4">
    <source>
    </source>
</evidence>
<evidence type="ECO:0000269" key="5">
    <source>
    </source>
</evidence>
<evidence type="ECO:0000269" key="6">
    <source>
    </source>
</evidence>
<evidence type="ECO:0000269" key="7">
    <source>
    </source>
</evidence>
<evidence type="ECO:0000269" key="8">
    <source>
    </source>
</evidence>
<evidence type="ECO:0000269" key="9">
    <source>
    </source>
</evidence>
<evidence type="ECO:0000269" key="10">
    <source>
    </source>
</evidence>
<evidence type="ECO:0000269" key="11">
    <source>
    </source>
</evidence>
<evidence type="ECO:0000269" key="12">
    <source>
    </source>
</evidence>
<evidence type="ECO:0000269" key="13">
    <source>
    </source>
</evidence>
<evidence type="ECO:0000269" key="14">
    <source>
    </source>
</evidence>
<evidence type="ECO:0007829" key="15">
    <source>
        <dbReference type="PDB" id="4UZB"/>
    </source>
</evidence>
<protein>
    <recommendedName>
        <fullName>Protein LANA1</fullName>
    </recommendedName>
</protein>